<gene>
    <name type="primary">outN</name>
</gene>
<keyword id="KW-0997">Cell inner membrane</keyword>
<keyword id="KW-1003">Cell membrane</keyword>
<keyword id="KW-0472">Membrane</keyword>
<keyword id="KW-0653">Protein transport</keyword>
<keyword id="KW-0735">Signal-anchor</keyword>
<keyword id="KW-0812">Transmembrane</keyword>
<keyword id="KW-1133">Transmembrane helix</keyword>
<keyword id="KW-0813">Transport</keyword>
<proteinExistence type="evidence at protein level"/>
<reference key="1">
    <citation type="journal article" date="1993" name="Mol. Microbiol.">
        <title>Molecular cloning and characterization of 13 out genes from Erwinia carotovora subspecies carotovora: genes encoding members of a general secretion pathway (GSP) widespread in Gram-negative bacteria.</title>
        <authorList>
            <person name="Reeves P.J."/>
            <person name="Whitcombe D."/>
            <person name="Wharam S."/>
            <person name="Gibson M."/>
            <person name="Allison G."/>
            <person name="Bunce N."/>
            <person name="Barallon R."/>
            <person name="Douglas P."/>
            <person name="Mulholland V."/>
            <person name="Stevens S."/>
            <person name="Walker S."/>
            <person name="Salmond G.P.C."/>
        </authorList>
    </citation>
    <scope>NUCLEOTIDE SEQUENCE [GENOMIC DNA]</scope>
    <source>
        <strain>SCRI 193</strain>
    </source>
</reference>
<reference key="2">
    <citation type="journal article" date="1994" name="Mol. Microbiol.">
        <title>Beta-lactamase topology probe analysis of the OutO NMePhe peptidase, and six other Out protein components of the Erwinia carotovora general secretion pathway apparatus.</title>
        <authorList>
            <person name="Reeves P.J."/>
            <person name="Douglas P."/>
            <person name="Salmond G.P.C."/>
        </authorList>
    </citation>
    <scope>TOPOLOGY</scope>
</reference>
<comment type="function">
    <text evidence="1">Involved in a type II secretion system (T2SS, formerly general secretion pathway, GSP) for the export of proteins (By similarity). Required for the translocation of the multiple pectic enzymes.</text>
</comment>
<comment type="subcellular location">
    <subcellularLocation>
        <location>Cell inner membrane</location>
        <topology>Single-pass type II membrane protein</topology>
    </subcellularLocation>
</comment>
<comment type="similarity">
    <text evidence="2">Belongs to the GSP N family.</text>
</comment>
<organism>
    <name type="scientific">Pectobacterium carotovorum subsp. carotovorum</name>
    <name type="common">Erwinia carotovora subsp. carotovora</name>
    <dbReference type="NCBI Taxonomy" id="555"/>
    <lineage>
        <taxon>Bacteria</taxon>
        <taxon>Pseudomonadati</taxon>
        <taxon>Pseudomonadota</taxon>
        <taxon>Gammaproteobacteria</taxon>
        <taxon>Enterobacterales</taxon>
        <taxon>Pectobacteriaceae</taxon>
        <taxon>Pectobacterium</taxon>
    </lineage>
</organism>
<dbReference type="EMBL" id="X70049">
    <property type="protein sequence ID" value="CAA49655.1"/>
    <property type="molecule type" value="Genomic_DNA"/>
</dbReference>
<dbReference type="PIR" id="S32868">
    <property type="entry name" value="S32868"/>
</dbReference>
<dbReference type="GO" id="GO:0005886">
    <property type="term" value="C:plasma membrane"/>
    <property type="evidence" value="ECO:0007669"/>
    <property type="project" value="UniProtKB-SubCell"/>
</dbReference>
<dbReference type="GO" id="GO:0015627">
    <property type="term" value="C:type II protein secretion system complex"/>
    <property type="evidence" value="ECO:0007669"/>
    <property type="project" value="InterPro"/>
</dbReference>
<dbReference type="GO" id="GO:0015628">
    <property type="term" value="P:protein secretion by the type II secretion system"/>
    <property type="evidence" value="ECO:0007669"/>
    <property type="project" value="InterPro"/>
</dbReference>
<dbReference type="InterPro" id="IPR000645">
    <property type="entry name" value="T2SS_GspN_CS"/>
</dbReference>
<dbReference type="InterPro" id="IPR022792">
    <property type="entry name" value="T2SS_protein-GspN"/>
</dbReference>
<dbReference type="Pfam" id="PF01203">
    <property type="entry name" value="T2SSN"/>
    <property type="match status" value="1"/>
</dbReference>
<dbReference type="PROSITE" id="PS01142">
    <property type="entry name" value="T2SP_N"/>
    <property type="match status" value="1"/>
</dbReference>
<sequence length="248" mass="26772">MKLKSGIVTGVALVLAYGLFLASYAPARLLTAVPLPAGMVVAEAAGTLWQGSLQRFSWRTLTLDDVHWNITFSDFMPALDIAFKNPEGIAGRGIIRGWQRAQFYQWQLSVPAGYLFSHMRFIVPIGAEGNVQLNLQEATVDRSGCQSLDANVTWPGARVKTPLGGLVLATPQATLRCQQGALEANLRQTSSHLQLSGKGSVTPKGEYRFTGQLSSGNDLPATMKKLLATTGKANEQGARTLNFQGRLL</sequence>
<accession>P31710</accession>
<feature type="chain" id="PRO_0000195053" description="Type II secretion system protein N">
    <location>
        <begin position="1"/>
        <end position="248"/>
    </location>
</feature>
<feature type="topological domain" description="Cytoplasmic" evidence="3">
    <location>
        <begin position="1"/>
        <end position="6"/>
    </location>
</feature>
<feature type="transmembrane region" description="Helical; Signal-anchor for type II membrane protein" evidence="2">
    <location>
        <begin position="7"/>
        <end position="27"/>
    </location>
</feature>
<feature type="topological domain" description="Periplasmic" evidence="3">
    <location>
        <begin position="28"/>
        <end position="248"/>
    </location>
</feature>
<name>GSPN_PECCC</name>
<evidence type="ECO:0000250" key="1"/>
<evidence type="ECO:0000305" key="2"/>
<evidence type="ECO:0000305" key="3">
    <source>
    </source>
</evidence>
<protein>
    <recommendedName>
        <fullName>Type II secretion system protein N</fullName>
        <shortName>T2SS protein N</shortName>
    </recommendedName>
    <alternativeName>
        <fullName>General secretion pathway protein N</fullName>
    </alternativeName>
    <alternativeName>
        <fullName>Pectic enzymes secretion protein OutN</fullName>
    </alternativeName>
</protein>